<gene>
    <name type="primary">EP2</name>
</gene>
<reference key="1">
    <citation type="journal article" date="1991" name="Plant Cell">
        <title>Cell-specific expression of the carrot EP2 lipid transfer protein gene.</title>
        <authorList>
            <person name="Sterk P."/>
            <person name="Booij H."/>
            <person name="Schellekens G.A."/>
            <person name="van Kammen A."/>
            <person name="de Vries S.C."/>
        </authorList>
    </citation>
    <scope>NUCLEOTIDE SEQUENCE [MRNA]</scope>
    <source>
        <strain>cv. Northrup King</strain>
    </source>
</reference>
<protein>
    <recommendedName>
        <fullName>Non-specific lipid-transfer protein</fullName>
        <shortName>LTP</shortName>
    </recommendedName>
    <alternativeName>
        <fullName>Extracellular protein 2</fullName>
    </alternativeName>
</protein>
<feature type="signal peptide" evidence="2">
    <location>
        <begin position="1"/>
        <end position="26"/>
    </location>
</feature>
<feature type="chain" id="PRO_0000018375" description="Non-specific lipid-transfer protein">
    <location>
        <begin position="27"/>
        <end position="120"/>
    </location>
</feature>
<feature type="disulfide bond" evidence="1">
    <location>
        <begin position="30"/>
        <end position="79"/>
    </location>
</feature>
<feature type="disulfide bond" evidence="1">
    <location>
        <begin position="40"/>
        <end position="56"/>
    </location>
</feature>
<feature type="disulfide bond" evidence="1">
    <location>
        <begin position="57"/>
        <end position="102"/>
    </location>
</feature>
<feature type="disulfide bond" evidence="1">
    <location>
        <begin position="77"/>
        <end position="116"/>
    </location>
</feature>
<keyword id="KW-1015">Disulfide bond</keyword>
<keyword id="KW-0446">Lipid-binding</keyword>
<keyword id="KW-0732">Signal</keyword>
<keyword id="KW-0813">Transport</keyword>
<proteinExistence type="evidence at transcript level"/>
<organism>
    <name type="scientific">Daucus carota</name>
    <name type="common">Wild carrot</name>
    <dbReference type="NCBI Taxonomy" id="4039"/>
    <lineage>
        <taxon>Eukaryota</taxon>
        <taxon>Viridiplantae</taxon>
        <taxon>Streptophyta</taxon>
        <taxon>Embryophyta</taxon>
        <taxon>Tracheophyta</taxon>
        <taxon>Spermatophyta</taxon>
        <taxon>Magnoliopsida</taxon>
        <taxon>eudicotyledons</taxon>
        <taxon>Gunneridae</taxon>
        <taxon>Pentapetalae</taxon>
        <taxon>asterids</taxon>
        <taxon>campanulids</taxon>
        <taxon>Apiales</taxon>
        <taxon>Apiaceae</taxon>
        <taxon>Apioideae</taxon>
        <taxon>Scandiceae</taxon>
        <taxon>Daucinae</taxon>
        <taxon>Daucus</taxon>
        <taxon>Daucus sect. Daucus</taxon>
    </lineage>
</organism>
<dbReference type="EMBL" id="M64746">
    <property type="protein sequence ID" value="AAB96834.1"/>
    <property type="molecule type" value="mRNA"/>
</dbReference>
<dbReference type="PIR" id="JQ1280">
    <property type="entry name" value="JQ1280"/>
</dbReference>
<dbReference type="SMR" id="P27631"/>
<dbReference type="Allergome" id="1058">
    <property type="allergen name" value="Dau c 3"/>
</dbReference>
<dbReference type="GO" id="GO:0008289">
    <property type="term" value="F:lipid binding"/>
    <property type="evidence" value="ECO:0007669"/>
    <property type="project" value="UniProtKB-KW"/>
</dbReference>
<dbReference type="GO" id="GO:0006869">
    <property type="term" value="P:lipid transport"/>
    <property type="evidence" value="ECO:0007669"/>
    <property type="project" value="InterPro"/>
</dbReference>
<dbReference type="CDD" id="cd01960">
    <property type="entry name" value="nsLTP1"/>
    <property type="match status" value="1"/>
</dbReference>
<dbReference type="Gene3D" id="1.10.110.10">
    <property type="entry name" value="Plant lipid-transfer and hydrophobic proteins"/>
    <property type="match status" value="1"/>
</dbReference>
<dbReference type="InterPro" id="IPR036312">
    <property type="entry name" value="Bifun_inhib/LTP/seed_sf"/>
</dbReference>
<dbReference type="InterPro" id="IPR016140">
    <property type="entry name" value="Bifunc_inhib/LTP/seed_store"/>
</dbReference>
<dbReference type="InterPro" id="IPR000528">
    <property type="entry name" value="Plant_nsLTP"/>
</dbReference>
<dbReference type="PANTHER" id="PTHR33076">
    <property type="entry name" value="NON-SPECIFIC LIPID-TRANSFER PROTEIN 2-RELATED"/>
    <property type="match status" value="1"/>
</dbReference>
<dbReference type="Pfam" id="PF00234">
    <property type="entry name" value="Tryp_alpha_amyl"/>
    <property type="match status" value="1"/>
</dbReference>
<dbReference type="PRINTS" id="PR00382">
    <property type="entry name" value="LIPIDTRNSFER"/>
</dbReference>
<dbReference type="SMART" id="SM00499">
    <property type="entry name" value="AAI"/>
    <property type="match status" value="1"/>
</dbReference>
<dbReference type="SUPFAM" id="SSF47699">
    <property type="entry name" value="Bifunctional inhibitor/lipid-transfer protein/seed storage 2S albumin"/>
    <property type="match status" value="1"/>
</dbReference>
<dbReference type="PROSITE" id="PS00597">
    <property type="entry name" value="PLANT_LTP"/>
    <property type="match status" value="1"/>
</dbReference>
<sequence>MGVLRSSFVAMMVMYMVLATTPNAEAVLTCGQVTGALAPCLGYLRSQVNVPVPLTCCNVVRGLNNAARTTLDKRTACGCLKQTANAVTGLNLNAAAGLPARCGVNIPYKISPTTDCNRVV</sequence>
<name>NLTP_DAUCA</name>
<evidence type="ECO:0000250" key="1"/>
<evidence type="ECO:0000255" key="2"/>
<evidence type="ECO:0000305" key="3"/>
<accession>P27631</accession>
<comment type="function">
    <text>Plant non-specific lipid-transfer proteins transfer phospholipids as well as galactolipids across membranes. May play a role in wax or cutin deposition in the cell walls of expanding epidermal cells and certain secretory tissues.</text>
</comment>
<comment type="tissue specificity">
    <text>Expressed in protoderm cells of somatic and zygotic embryos, and transiently expressed in epidermal cell layers of leaves, flowers and seeds.</text>
</comment>
<comment type="similarity">
    <text evidence="3">Belongs to the plant LTP family.</text>
</comment>